<keyword id="KW-0002">3D-structure</keyword>
<keyword id="KW-0997">Cell inner membrane</keyword>
<keyword id="KW-1003">Cell membrane</keyword>
<keyword id="KW-0201">Cytochrome c-type biogenesis</keyword>
<keyword id="KW-0903">Direct protein sequencing</keyword>
<keyword id="KW-1015">Disulfide bond</keyword>
<keyword id="KW-0249">Electron transport</keyword>
<keyword id="KW-0472">Membrane</keyword>
<keyword id="KW-0520">NAD</keyword>
<keyword id="KW-0560">Oxidoreductase</keyword>
<keyword id="KW-0676">Redox-active center</keyword>
<keyword id="KW-1185">Reference proteome</keyword>
<keyword id="KW-0732">Signal</keyword>
<keyword id="KW-0812">Transmembrane</keyword>
<keyword id="KW-1133">Transmembrane helix</keyword>
<keyword id="KW-0813">Transport</keyword>
<proteinExistence type="evidence at protein level"/>
<sequence length="565" mass="61795">MAQRIFTLILLLCSTSVFAGLFDAPGRSQFVPADQAFAFDFQQNQHDLNLTWQIKDGYYLYRKQIRITPEHAKIADVQLPQGVWHEDEFYGKSEIYRDRLTLPVTINQASAGATLTVTYQGCADAGFCYPPETKTVPLSEVVANNAAPQPVSVPQQEQPTAQLPFSALWALLIGIGIAFTPCVLPMYPLISGIVLGGKQRLSTARALLLTFIYVQGMALTYTALGLVVAAAGLQFQAALQHPYVLIGLAIVFTLLAMSMFGLFTLQLPSSLQTRLTLMSNRQQGGSPGGVFVMGAIAGLICSPCTTAPLSAILLYIAQSGNMWLGGGTLYLYALGMGLPLMLITVFGNRLLPKSGPWMEQVKTAFGFVILALPVFLLERVIGDVWGLRLWSALGVAFFGWAFITSLQAKRGWMRIVQIILLAAALVSVRPLQDWAFGATHTAQTQTHLNFTQIKTVDELNQALVEAKGKPVMLDLYADWCVACKEFEKYTFSDPQVQKALADTVLLQANVTANDAQDVALLKHLNVLGLPTILFFDGQGQEHPQARVTGFMDAETFSAHLRDRQP</sequence>
<comment type="function">
    <text>Required to facilitate the formation of correct disulfide bonds in some periplasmic proteins and for the assembly of the periplasmic c-type cytochromes. Acts by transferring electrons from cytoplasmic thioredoxin to the periplasm, thereby maintaining the active site of DsbC, DsbE and DsbG in a reduced state. This transfer involves a cascade of disulfide bond formation and reduction steps.</text>
</comment>
<comment type="catalytic activity">
    <reaction>
        <text>[protein]-dithiol + NAD(+) = [protein]-disulfide + NADH + H(+)</text>
        <dbReference type="Rhea" id="RHEA:18749"/>
        <dbReference type="Rhea" id="RHEA-COMP:10593"/>
        <dbReference type="Rhea" id="RHEA-COMP:10594"/>
        <dbReference type="ChEBI" id="CHEBI:15378"/>
        <dbReference type="ChEBI" id="CHEBI:29950"/>
        <dbReference type="ChEBI" id="CHEBI:50058"/>
        <dbReference type="ChEBI" id="CHEBI:57540"/>
        <dbReference type="ChEBI" id="CHEBI:57945"/>
        <dbReference type="EC" id="1.8.1.8"/>
    </reaction>
</comment>
<comment type="catalytic activity">
    <reaction>
        <text>[protein]-dithiol + NADP(+) = [protein]-disulfide + NADPH + H(+)</text>
        <dbReference type="Rhea" id="RHEA:18753"/>
        <dbReference type="Rhea" id="RHEA-COMP:10593"/>
        <dbReference type="Rhea" id="RHEA-COMP:10594"/>
        <dbReference type="ChEBI" id="CHEBI:15378"/>
        <dbReference type="ChEBI" id="CHEBI:29950"/>
        <dbReference type="ChEBI" id="CHEBI:50058"/>
        <dbReference type="ChEBI" id="CHEBI:57783"/>
        <dbReference type="ChEBI" id="CHEBI:58349"/>
        <dbReference type="EC" id="1.8.1.8"/>
    </reaction>
</comment>
<comment type="interaction">
    <interactant intactId="EBI-9014057">
        <id>P36655</id>
    </interactant>
    <interactant intactId="EBI-9014059">
        <id>P0AA86</id>
        <label>dsbE</label>
    </interactant>
    <organismsDiffer>false</organismsDiffer>
    <experiments>4</experiments>
</comment>
<comment type="subcellular location">
    <subcellularLocation>
        <location>Cell inner membrane</location>
        <topology>Multi-pass membrane protein</topology>
    </subcellularLocation>
</comment>
<comment type="miscellaneous">
    <text>The consequences of replacement of the cysteines with alanines were found to depend on the conditions tested and on the reporter system used for the analysis, and then differ depending on the references.</text>
</comment>
<comment type="similarity">
    <text evidence="5">Belongs to the thioredoxin family. DsbD subfamily.</text>
</comment>
<comment type="sequence caution" evidence="5">
    <conflict type="erroneous initiation">
        <sequence resource="EMBL-CDS" id="CAA54781"/>
    </conflict>
</comment>
<comment type="sequence caution" evidence="5">
    <conflict type="erroneous initiation">
        <sequence resource="EMBL-CDS" id="CAA85375"/>
    </conflict>
</comment>
<accession>P36655</accession>
<accession>P76796</accession>
<accession>Q2M6G8</accession>
<evidence type="ECO:0000255" key="1"/>
<evidence type="ECO:0000269" key="2">
    <source>
    </source>
</evidence>
<evidence type="ECO:0000269" key="3">
    <source>
    </source>
</evidence>
<evidence type="ECO:0000269" key="4">
    <source>
    </source>
</evidence>
<evidence type="ECO:0000305" key="5"/>
<evidence type="ECO:0007829" key="6">
    <source>
        <dbReference type="PDB" id="1L6P"/>
    </source>
</evidence>
<evidence type="ECO:0007829" key="7">
    <source>
        <dbReference type="PDB" id="1VRS"/>
    </source>
</evidence>
<evidence type="ECO:0007829" key="8">
    <source>
        <dbReference type="PDB" id="2FWH"/>
    </source>
</evidence>
<protein>
    <recommendedName>
        <fullName>Thiol:disulfide interchange protein DsbD</fullName>
        <ecNumber>1.8.1.8</ecNumber>
    </recommendedName>
    <alternativeName>
        <fullName>C-type cytochrome biogenesis protein CycZ</fullName>
    </alternativeName>
    <alternativeName>
        <fullName>Inner membrane copper tolerance protein</fullName>
    </alternativeName>
    <alternativeName>
        <fullName>Protein-disulfide reductase</fullName>
        <shortName>Disulfide reductase</shortName>
    </alternativeName>
</protein>
<dbReference type="EC" id="1.8.1.8"/>
<dbReference type="EMBL" id="Z36905">
    <property type="protein sequence ID" value="CAA85375.1"/>
    <property type="status" value="ALT_INIT"/>
    <property type="molecule type" value="Genomic_DNA"/>
</dbReference>
<dbReference type="EMBL" id="X77707">
    <property type="protein sequence ID" value="CAA54781.1"/>
    <property type="status" value="ALT_INIT"/>
    <property type="molecule type" value="Genomic_DNA"/>
</dbReference>
<dbReference type="EMBL" id="U14003">
    <property type="protein sequence ID" value="AAA97035.1"/>
    <property type="molecule type" value="Genomic_DNA"/>
</dbReference>
<dbReference type="EMBL" id="U00096">
    <property type="protein sequence ID" value="AAC77096.1"/>
    <property type="molecule type" value="Genomic_DNA"/>
</dbReference>
<dbReference type="EMBL" id="AP009048">
    <property type="protein sequence ID" value="BAE78138.1"/>
    <property type="molecule type" value="Genomic_DNA"/>
</dbReference>
<dbReference type="PIR" id="S56364">
    <property type="entry name" value="S56364"/>
</dbReference>
<dbReference type="RefSeq" id="NP_418559.1">
    <property type="nucleotide sequence ID" value="NC_000913.3"/>
</dbReference>
<dbReference type="RefSeq" id="WP_000068922.1">
    <property type="nucleotide sequence ID" value="NZ_SSZK01000018.1"/>
</dbReference>
<dbReference type="PDB" id="1JPE">
    <property type="method" value="X-ray"/>
    <property type="resolution" value="1.90 A"/>
    <property type="chains" value="A=20-151"/>
</dbReference>
<dbReference type="PDB" id="1JZD">
    <property type="method" value="X-ray"/>
    <property type="resolution" value="2.30 A"/>
    <property type="chains" value="C=20-151"/>
</dbReference>
<dbReference type="PDB" id="1L6P">
    <property type="method" value="X-ray"/>
    <property type="resolution" value="1.65 A"/>
    <property type="chains" value="A=20-144"/>
</dbReference>
<dbReference type="PDB" id="1VRS">
    <property type="method" value="X-ray"/>
    <property type="resolution" value="2.85 A"/>
    <property type="chains" value="A/B/C=20-162, D/E/F=438-565"/>
</dbReference>
<dbReference type="PDB" id="1Z5Y">
    <property type="method" value="X-ray"/>
    <property type="resolution" value="1.94 A"/>
    <property type="chains" value="D=20-162"/>
</dbReference>
<dbReference type="PDB" id="2FWE">
    <property type="method" value="X-ray"/>
    <property type="resolution" value="1.65 A"/>
    <property type="chains" value="A=438-565"/>
</dbReference>
<dbReference type="PDB" id="2FWF">
    <property type="method" value="X-ray"/>
    <property type="resolution" value="1.30 A"/>
    <property type="chains" value="A=438-565"/>
</dbReference>
<dbReference type="PDB" id="2FWG">
    <property type="method" value="X-ray"/>
    <property type="resolution" value="1.10 A"/>
    <property type="chains" value="A=438-565"/>
</dbReference>
<dbReference type="PDB" id="2FWH">
    <property type="method" value="X-ray"/>
    <property type="resolution" value="0.99 A"/>
    <property type="chains" value="A=438-565"/>
</dbReference>
<dbReference type="PDB" id="3PFU">
    <property type="method" value="X-ray"/>
    <property type="resolution" value="1.80 A"/>
    <property type="chains" value="A=21-151"/>
</dbReference>
<dbReference type="PDB" id="4IP1">
    <property type="method" value="X-ray"/>
    <property type="resolution" value="2.47 A"/>
    <property type="chains" value="A=444-565"/>
</dbReference>
<dbReference type="PDB" id="4IP6">
    <property type="method" value="X-ray"/>
    <property type="resolution" value="2.23 A"/>
    <property type="chains" value="A=444-565"/>
</dbReference>
<dbReference type="PDB" id="5NHI">
    <property type="method" value="X-ray"/>
    <property type="resolution" value="2.60 A"/>
    <property type="chains" value="A/B=21-151"/>
</dbReference>
<dbReference type="PDBsum" id="1JPE"/>
<dbReference type="PDBsum" id="1JZD"/>
<dbReference type="PDBsum" id="1L6P"/>
<dbReference type="PDBsum" id="1VRS"/>
<dbReference type="PDBsum" id="1Z5Y"/>
<dbReference type="PDBsum" id="2FWE"/>
<dbReference type="PDBsum" id="2FWF"/>
<dbReference type="PDBsum" id="2FWG"/>
<dbReference type="PDBsum" id="2FWH"/>
<dbReference type="PDBsum" id="3PFU"/>
<dbReference type="PDBsum" id="4IP1"/>
<dbReference type="PDBsum" id="4IP6"/>
<dbReference type="PDBsum" id="5NHI"/>
<dbReference type="BMRB" id="P36655"/>
<dbReference type="SMR" id="P36655"/>
<dbReference type="BioGRID" id="4262691">
    <property type="interactions" value="1010"/>
</dbReference>
<dbReference type="DIP" id="DIP-9476N"/>
<dbReference type="FunCoup" id="P36655">
    <property type="interactions" value="137"/>
</dbReference>
<dbReference type="IntAct" id="P36655">
    <property type="interactions" value="1"/>
</dbReference>
<dbReference type="STRING" id="511145.b4136"/>
<dbReference type="TCDB" id="5.A.1.1.1">
    <property type="family name" value="the disulfide bond oxidoreductase d (dsbd) family"/>
</dbReference>
<dbReference type="jPOST" id="P36655"/>
<dbReference type="PaxDb" id="511145-b4136"/>
<dbReference type="EnsemblBacteria" id="AAC77096">
    <property type="protein sequence ID" value="AAC77096"/>
    <property type="gene ID" value="b4136"/>
</dbReference>
<dbReference type="GeneID" id="948649"/>
<dbReference type="KEGG" id="ecj:JW5734"/>
<dbReference type="KEGG" id="eco:b4136"/>
<dbReference type="KEGG" id="ecoc:C3026_22355"/>
<dbReference type="PATRIC" id="fig|511145.12.peg.4267"/>
<dbReference type="EchoBASE" id="EB2095"/>
<dbReference type="eggNOG" id="COG4232">
    <property type="taxonomic scope" value="Bacteria"/>
</dbReference>
<dbReference type="HOGENOM" id="CLU_014657_3_0_6"/>
<dbReference type="InParanoid" id="P36655"/>
<dbReference type="OMA" id="WPIIPMT"/>
<dbReference type="OrthoDB" id="9811036at2"/>
<dbReference type="PhylomeDB" id="P36655"/>
<dbReference type="BioCyc" id="EcoCyc:DSBD-MONOMER"/>
<dbReference type="BioCyc" id="MetaCyc:DSBD-MONOMER"/>
<dbReference type="BRENDA" id="1.8.4.16">
    <property type="organism ID" value="2026"/>
</dbReference>
<dbReference type="EvolutionaryTrace" id="P36655"/>
<dbReference type="PRO" id="PR:P36655"/>
<dbReference type="Proteomes" id="UP000000625">
    <property type="component" value="Chromosome"/>
</dbReference>
<dbReference type="GO" id="GO:0005886">
    <property type="term" value="C:plasma membrane"/>
    <property type="evidence" value="ECO:0000255"/>
    <property type="project" value="EcoCyc"/>
</dbReference>
<dbReference type="GO" id="GO:0009055">
    <property type="term" value="F:electron transfer activity"/>
    <property type="evidence" value="ECO:0007669"/>
    <property type="project" value="UniProtKB-UniRule"/>
</dbReference>
<dbReference type="GO" id="GO:0047134">
    <property type="term" value="F:protein-disulfide reductase [NAD(P)H] activity"/>
    <property type="evidence" value="ECO:0007669"/>
    <property type="project" value="UniProtKB-UniRule"/>
</dbReference>
<dbReference type="GO" id="GO:0015035">
    <property type="term" value="F:protein-disulfide reductase activity"/>
    <property type="evidence" value="ECO:0000314"/>
    <property type="project" value="EcoCyc"/>
</dbReference>
<dbReference type="GO" id="GO:0045454">
    <property type="term" value="P:cell redox homeostasis"/>
    <property type="evidence" value="ECO:0000315"/>
    <property type="project" value="EcoCyc"/>
</dbReference>
<dbReference type="GO" id="GO:0017004">
    <property type="term" value="P:cytochrome complex assembly"/>
    <property type="evidence" value="ECO:0007669"/>
    <property type="project" value="UniProtKB-UniRule"/>
</dbReference>
<dbReference type="GO" id="GO:0046688">
    <property type="term" value="P:response to copper ion"/>
    <property type="evidence" value="ECO:0000315"/>
    <property type="project" value="EcoCyc"/>
</dbReference>
<dbReference type="CDD" id="cd02953">
    <property type="entry name" value="DsbDgamma"/>
    <property type="match status" value="1"/>
</dbReference>
<dbReference type="FunFam" id="2.60.40.1250:FF:000001">
    <property type="entry name" value="Thiol:disulfide interchange protein DsbD"/>
    <property type="match status" value="1"/>
</dbReference>
<dbReference type="FunFam" id="3.40.30.10:FF:000116">
    <property type="entry name" value="Thiol:disulfide interchange protein DsbD"/>
    <property type="match status" value="1"/>
</dbReference>
<dbReference type="Gene3D" id="3.40.30.10">
    <property type="entry name" value="Glutaredoxin"/>
    <property type="match status" value="1"/>
</dbReference>
<dbReference type="Gene3D" id="2.60.40.1250">
    <property type="entry name" value="Thiol:disulfide interchange protein DsbD, N-terminal domain"/>
    <property type="match status" value="1"/>
</dbReference>
<dbReference type="HAMAP" id="MF_00399">
    <property type="entry name" value="DbsD"/>
    <property type="match status" value="1"/>
</dbReference>
<dbReference type="InterPro" id="IPR003834">
    <property type="entry name" value="Cyt_c_assmbl_TM_dom"/>
</dbReference>
<dbReference type="InterPro" id="IPR035671">
    <property type="entry name" value="DsbD_gamma"/>
</dbReference>
<dbReference type="InterPro" id="IPR028250">
    <property type="entry name" value="DsbDN"/>
</dbReference>
<dbReference type="InterPro" id="IPR036929">
    <property type="entry name" value="DsbDN_sf"/>
</dbReference>
<dbReference type="InterPro" id="IPR022910">
    <property type="entry name" value="Thiol_diS_interchange_DbsD"/>
</dbReference>
<dbReference type="InterPro" id="IPR012336">
    <property type="entry name" value="Thioredoxin-like_fold"/>
</dbReference>
<dbReference type="InterPro" id="IPR036249">
    <property type="entry name" value="Thioredoxin-like_sf"/>
</dbReference>
<dbReference type="InterPro" id="IPR017937">
    <property type="entry name" value="Thioredoxin_CS"/>
</dbReference>
<dbReference type="InterPro" id="IPR013766">
    <property type="entry name" value="Thioredoxin_domain"/>
</dbReference>
<dbReference type="NCBIfam" id="NF001419">
    <property type="entry name" value="PRK00293.1"/>
    <property type="match status" value="1"/>
</dbReference>
<dbReference type="PANTHER" id="PTHR32234">
    <property type="entry name" value="THIOL:DISULFIDE INTERCHANGE PROTEIN DSBD"/>
    <property type="match status" value="1"/>
</dbReference>
<dbReference type="PANTHER" id="PTHR32234:SF0">
    <property type="entry name" value="THIOL:DISULFIDE INTERCHANGE PROTEIN DSBD"/>
    <property type="match status" value="1"/>
</dbReference>
<dbReference type="Pfam" id="PF11412">
    <property type="entry name" value="DsbD_N"/>
    <property type="match status" value="1"/>
</dbReference>
<dbReference type="Pfam" id="PF02683">
    <property type="entry name" value="DsbD_TM"/>
    <property type="match status" value="1"/>
</dbReference>
<dbReference type="Pfam" id="PF13098">
    <property type="entry name" value="Thioredoxin_2"/>
    <property type="match status" value="1"/>
</dbReference>
<dbReference type="SUPFAM" id="SSF74863">
    <property type="entry name" value="Thiol:disulfide interchange protein DsbD, N-terminal domain (DsbD-alpha)"/>
    <property type="match status" value="1"/>
</dbReference>
<dbReference type="SUPFAM" id="SSF52833">
    <property type="entry name" value="Thioredoxin-like"/>
    <property type="match status" value="1"/>
</dbReference>
<dbReference type="PROSITE" id="PS00194">
    <property type="entry name" value="THIOREDOXIN_1"/>
    <property type="match status" value="1"/>
</dbReference>
<dbReference type="PROSITE" id="PS51352">
    <property type="entry name" value="THIOREDOXIN_2"/>
    <property type="match status" value="1"/>
</dbReference>
<name>DSBD_ECOLI</name>
<reference key="1">
    <citation type="journal article" date="1995" name="EMBO J.">
        <title>Identification and characterization of a new disulfide isomerase-like protein (DsbD) in Escherichia coli.</title>
        <authorList>
            <person name="Missiakas D."/>
            <person name="Schwager F."/>
            <person name="Raina S."/>
        </authorList>
    </citation>
    <scope>NUCLEOTIDE SEQUENCE [GENOMIC DNA]</scope>
    <scope>CHARACTERIZATION</scope>
</reference>
<reference key="2">
    <citation type="journal article" date="1995" name="Mol. Microbiol.">
        <title>Molecular genetics of a chromosomal locus involved in copper tolerance in Escherichia coli K-12.</title>
        <authorList>
            <person name="Fong S.-T."/>
            <person name="Camakaris J."/>
            <person name="Lee B.T.O."/>
        </authorList>
    </citation>
    <scope>NUCLEOTIDE SEQUENCE [GENOMIC DNA]</scope>
    <source>
        <strain>K12 / W3110 / ATCC 27325 / DSM 5911</strain>
    </source>
</reference>
<reference key="3">
    <citation type="journal article" date="1995" name="Mol. Microbiol.">
        <title>The biogenesis of c-type cytochromes in Escherichia coli requires a membrane-bound protein, DipZ, with a protein disulphide isomerase-like domain.</title>
        <authorList>
            <person name="Crooke H.R."/>
            <person name="Cole J.A."/>
        </authorList>
    </citation>
    <scope>NUCLEOTIDE SEQUENCE [GENOMIC DNA]</scope>
    <source>
        <strain>K12</strain>
    </source>
</reference>
<reference key="4">
    <citation type="journal article" date="1995" name="Nucleic Acids Res.">
        <title>Analysis of the Escherichia coli genome VI: DNA sequence of the region from 92.8 through 100 minutes.</title>
        <authorList>
            <person name="Burland V.D."/>
            <person name="Plunkett G. III"/>
            <person name="Sofia H.J."/>
            <person name="Daniels D.L."/>
            <person name="Blattner F.R."/>
        </authorList>
    </citation>
    <scope>NUCLEOTIDE SEQUENCE [LARGE SCALE GENOMIC DNA]</scope>
    <source>
        <strain>K12 / MG1655 / ATCC 47076</strain>
    </source>
</reference>
<reference key="5">
    <citation type="journal article" date="1997" name="Science">
        <title>The complete genome sequence of Escherichia coli K-12.</title>
        <authorList>
            <person name="Blattner F.R."/>
            <person name="Plunkett G. III"/>
            <person name="Bloch C.A."/>
            <person name="Perna N.T."/>
            <person name="Burland V."/>
            <person name="Riley M."/>
            <person name="Collado-Vides J."/>
            <person name="Glasner J.D."/>
            <person name="Rode C.K."/>
            <person name="Mayhew G.F."/>
            <person name="Gregor J."/>
            <person name="Davis N.W."/>
            <person name="Kirkpatrick H.A."/>
            <person name="Goeden M.A."/>
            <person name="Rose D.J."/>
            <person name="Mau B."/>
            <person name="Shao Y."/>
        </authorList>
    </citation>
    <scope>NUCLEOTIDE SEQUENCE [LARGE SCALE GENOMIC DNA]</scope>
    <source>
        <strain>K12 / MG1655 / ATCC 47076</strain>
    </source>
</reference>
<reference key="6">
    <citation type="journal article" date="2006" name="Mol. Syst. Biol.">
        <title>Highly accurate genome sequences of Escherichia coli K-12 strains MG1655 and W3110.</title>
        <authorList>
            <person name="Hayashi K."/>
            <person name="Morooka N."/>
            <person name="Yamamoto Y."/>
            <person name="Fujita K."/>
            <person name="Isono K."/>
            <person name="Choi S."/>
            <person name="Ohtsubo E."/>
            <person name="Baba T."/>
            <person name="Wanner B.L."/>
            <person name="Mori H."/>
            <person name="Horiuchi T."/>
        </authorList>
    </citation>
    <scope>NUCLEOTIDE SEQUENCE [LARGE SCALE GENOMIC DNA]</scope>
    <source>
        <strain>K12 / W3110 / ATCC 27325 / DSM 5911</strain>
    </source>
</reference>
<reference key="7">
    <citation type="journal article" date="2000" name="Mol. Microbiol.">
        <title>Escherichia coli DipZ: anatomy of a transmembrane protein disulphide reductase in which three pairs of cysteine residues, one in each of three domains, contribute differentially to function.</title>
        <authorList>
            <person name="Gordon E.H.J."/>
            <person name="Page M.D."/>
            <person name="Willis A.C."/>
            <person name="Ferguson S.J."/>
        </authorList>
    </citation>
    <scope>PROTEIN SEQUENCE OF 2-8 (PRECURSOR PROTEIN)</scope>
    <scope>PROTEIN SEQUENCE OF 20-34</scope>
    <scope>TOPOLOGY</scope>
    <scope>MUTAGENESIS OF CYS-122; CYS-128; CYS-182; CYS-301; CYS-304; CYS-480 AND CYS-483</scope>
</reference>
<reference key="8">
    <citation type="journal article" date="2000" name="Mol. Microbiol.">
        <title>Transfer of electrons across the cytoplasmic membrane by DsbD, a membrane protein involved in thiol-disulphide exchange and protein folding in the bacterial periplasm.</title>
        <authorList>
            <person name="Chung J."/>
            <person name="Chen T."/>
            <person name="Missiakas D."/>
        </authorList>
    </citation>
    <scope>PROTEIN SEQUENCE OF 20-27</scope>
    <scope>TOPOLOGY</scope>
    <scope>MUTAGENESIS OF CYS-122; CYS-128; CYS-182; CYS-301; CYS-304; CYS-480 AND CYS-483</scope>
    <source>
        <strain>BL21-DE3</strain>
    </source>
</reference>
<reference key="9">
    <citation type="submission" date="1995-05" db="UniProtKB">
        <authorList>
            <person name="Missiakas D."/>
            <person name="Hughes G.J."/>
            <person name="Frutiger S."/>
            <person name="Paquet N."/>
            <person name="Raina S."/>
        </authorList>
    </citation>
    <scope>PROTEIN SEQUENCE OF 78-82</scope>
</reference>
<reference key="10">
    <citation type="journal article" date="1994" name="FEBS Lett.">
        <title>Specific thiol compounds complement deficiency in c-type cytochrome biogenesis in Escherichia coli carrying a mutation in a membrane-bound disulphide isomerase-like protein.</title>
        <authorList>
            <person name="Sambongi Y."/>
            <person name="Ferguson S.J."/>
        </authorList>
    </citation>
    <scope>CHARACTERIZATION</scope>
</reference>
<reference key="11">
    <citation type="journal article" date="1999" name="EMBO J.">
        <title>Six conserved cysteines of the membrane protein DsbD are required for the transfer of electrons from the cytoplasm to the periplasm of Escherichia coli.</title>
        <authorList>
            <person name="Stewart E.J."/>
            <person name="Katzen F."/>
            <person name="Beckwith J."/>
        </authorList>
    </citation>
    <scope>TOPOLOGY</scope>
    <scope>MUTAGENESIS OF CYS-13; CYS-122; CYS-128; CYS-182; CYS-301; CYS-304; CYS-480 AND CYS-483</scope>
    <source>
        <strain>DHB4</strain>
        <strain>RI242</strain>
    </source>
</reference>
<reference key="12">
    <citation type="journal article" date="2000" name="Cell">
        <title>Transmembrane electron transfer by the membrane protein DsbD occurs via a disulfide bond cascade.</title>
        <authorList>
            <person name="Katzen F."/>
            <person name="Beckwith J."/>
        </authorList>
    </citation>
    <scope>CHARACTERIZATION</scope>
</reference>
<reference key="13">
    <citation type="journal article" date="2001" name="J. Biol. Chem.">
        <title>DsbD-catalyzed transport of electrons across the membrane of Escherichia coli.</title>
        <authorList>
            <person name="Krupp R."/>
            <person name="Chan C."/>
            <person name="Missiakas D."/>
        </authorList>
    </citation>
    <scope>CHARACTERIZATION</scope>
    <source>
        <strain>K38</strain>
    </source>
</reference>
<reference key="14">
    <citation type="journal article" date="2005" name="Science">
        <title>Global topology analysis of the Escherichia coli inner membrane proteome.</title>
        <authorList>
            <person name="Daley D.O."/>
            <person name="Rapp M."/>
            <person name="Granseth E."/>
            <person name="Melen K."/>
            <person name="Drew D."/>
            <person name="von Heijne G."/>
        </authorList>
    </citation>
    <scope>TOPOLOGY [LARGE SCALE ANALYSIS]</scope>
    <source>
        <strain>K12 / MG1655 / ATCC 47076</strain>
    </source>
</reference>
<feature type="signal peptide" evidence="3 4">
    <location>
        <begin position="1"/>
        <end position="19"/>
    </location>
</feature>
<feature type="chain" id="PRO_0000007373" description="Thiol:disulfide interchange protein DsbD">
    <location>
        <begin position="20"/>
        <end position="565"/>
    </location>
</feature>
<feature type="topological domain" description="Periplasmic" evidence="1">
    <location>
        <begin position="20"/>
        <end position="162"/>
    </location>
</feature>
<feature type="transmembrane region" description="Helical" evidence="1">
    <location>
        <begin position="163"/>
        <end position="183"/>
    </location>
</feature>
<feature type="topological domain" description="Cytoplasmic" evidence="1">
    <location>
        <begin position="184"/>
        <end position="207"/>
    </location>
</feature>
<feature type="transmembrane region" description="Helical" evidence="1">
    <location>
        <begin position="208"/>
        <end position="228"/>
    </location>
</feature>
<feature type="topological domain" description="Periplasmic" evidence="1">
    <location>
        <begin position="229"/>
        <end position="242"/>
    </location>
</feature>
<feature type="transmembrane region" description="Helical" evidence="1">
    <location>
        <begin position="243"/>
        <end position="263"/>
    </location>
</feature>
<feature type="topological domain" description="Cytoplasmic" evidence="1">
    <location>
        <begin position="264"/>
        <end position="295"/>
    </location>
</feature>
<feature type="transmembrane region" description="Helical" evidence="1">
    <location>
        <begin position="296"/>
        <end position="316"/>
    </location>
</feature>
<feature type="topological domain" description="Periplasmic" evidence="1">
    <location>
        <begin position="317"/>
        <end position="322"/>
    </location>
</feature>
<feature type="transmembrane region" description="Helical" evidence="1">
    <location>
        <begin position="323"/>
        <end position="343"/>
    </location>
</feature>
<feature type="topological domain" description="Cytoplasmic" evidence="1">
    <location>
        <begin position="344"/>
        <end position="356"/>
    </location>
</feature>
<feature type="transmembrane region" description="Helical" evidence="1">
    <location>
        <begin position="357"/>
        <end position="377"/>
    </location>
</feature>
<feature type="topological domain" description="Periplasmic" evidence="1">
    <location>
        <begin position="378"/>
        <end position="383"/>
    </location>
</feature>
<feature type="transmembrane region" description="Helical" evidence="1">
    <location>
        <begin position="384"/>
        <end position="404"/>
    </location>
</feature>
<feature type="topological domain" description="Cytoplasmic" evidence="1">
    <location>
        <begin position="405"/>
        <end position="417"/>
    </location>
</feature>
<feature type="transmembrane region" description="Helical" evidence="1">
    <location>
        <begin position="418"/>
        <end position="438"/>
    </location>
</feature>
<feature type="topological domain" description="Periplasmic" evidence="1">
    <location>
        <begin position="439"/>
        <end position="565"/>
    </location>
</feature>
<feature type="domain" description="Thioredoxin">
    <location>
        <begin position="434"/>
        <end position="565"/>
    </location>
</feature>
<feature type="disulfide bond" description="Redox-active" evidence="5">
    <location>
        <begin position="122"/>
        <end position="128"/>
    </location>
</feature>
<feature type="disulfide bond" description="Redox-active" evidence="5">
    <location>
        <begin position="182"/>
        <end position="304"/>
    </location>
</feature>
<feature type="disulfide bond" description="Redox-active" evidence="5">
    <location>
        <begin position="480"/>
        <end position="483"/>
    </location>
</feature>
<feature type="mutagenesis site" description="No loss of activity." evidence="2">
    <original>C</original>
    <variation>A</variation>
    <location>
        <position position="13"/>
    </location>
</feature>
<feature type="mutagenesis site" description="Loss of activity." evidence="2 3 4">
    <original>C</original>
    <variation>A</variation>
    <location>
        <position position="122"/>
    </location>
</feature>
<feature type="mutagenesis site" description="Loss of activity." evidence="2 3 4">
    <original>C</original>
    <variation>A</variation>
    <location>
        <position position="128"/>
    </location>
</feature>
<feature type="mutagenesis site" description="Loss of activity." evidence="2 3 4">
    <original>C</original>
    <variation>A</variation>
    <location>
        <position position="182"/>
    </location>
</feature>
<feature type="mutagenesis site" description="No loss of activity." evidence="2 3 4">
    <original>C</original>
    <variation>A</variation>
    <location>
        <position position="301"/>
    </location>
</feature>
<feature type="mutagenesis site" description="Loss of activity." evidence="2 3 4">
    <original>C</original>
    <variation>A</variation>
    <location>
        <position position="304"/>
    </location>
</feature>
<feature type="mutagenesis site" description="Loss of activity; when associated with A-483." evidence="2 3 4">
    <original>C</original>
    <variation>A</variation>
    <location>
        <position position="480"/>
    </location>
</feature>
<feature type="mutagenesis site" description="Loss of activity; when associated with A-480." evidence="2 3 4">
    <original>C</original>
    <variation>A</variation>
    <location>
        <position position="483"/>
    </location>
</feature>
<feature type="strand" evidence="6">
    <location>
        <begin position="25"/>
        <end position="28"/>
    </location>
</feature>
<feature type="helix" evidence="6">
    <location>
        <begin position="33"/>
        <end position="36"/>
    </location>
</feature>
<feature type="strand" evidence="6">
    <location>
        <begin position="37"/>
        <end position="44"/>
    </location>
</feature>
<feature type="strand" evidence="6">
    <location>
        <begin position="47"/>
        <end position="54"/>
    </location>
</feature>
<feature type="strand" evidence="6">
    <location>
        <begin position="58"/>
        <end position="61"/>
    </location>
</feature>
<feature type="helix" evidence="6">
    <location>
        <begin position="62"/>
        <end position="64"/>
    </location>
</feature>
<feature type="strand" evidence="6">
    <location>
        <begin position="66"/>
        <end position="74"/>
    </location>
</feature>
<feature type="strand" evidence="6">
    <location>
        <begin position="83"/>
        <end position="87"/>
    </location>
</feature>
<feature type="turn" evidence="6">
    <location>
        <begin position="88"/>
        <end position="90"/>
    </location>
</feature>
<feature type="strand" evidence="6">
    <location>
        <begin position="91"/>
        <end position="96"/>
    </location>
</feature>
<feature type="strand" evidence="6">
    <location>
        <begin position="98"/>
        <end position="119"/>
    </location>
</feature>
<feature type="strand" evidence="6">
    <location>
        <begin position="121"/>
        <end position="123"/>
    </location>
</feature>
<feature type="turn" evidence="6">
    <location>
        <begin position="124"/>
        <end position="126"/>
    </location>
</feature>
<feature type="strand" evidence="6">
    <location>
        <begin position="132"/>
        <end position="137"/>
    </location>
</feature>
<feature type="helix" evidence="8">
    <location>
        <begin position="456"/>
        <end position="466"/>
    </location>
</feature>
<feature type="strand" evidence="8">
    <location>
        <begin position="471"/>
        <end position="476"/>
    </location>
</feature>
<feature type="helix" evidence="8">
    <location>
        <begin position="481"/>
        <end position="489"/>
    </location>
</feature>
<feature type="turn" evidence="8">
    <location>
        <begin position="490"/>
        <end position="492"/>
    </location>
</feature>
<feature type="helix" evidence="8">
    <location>
        <begin position="494"/>
        <end position="499"/>
    </location>
</feature>
<feature type="turn" evidence="8">
    <location>
        <begin position="500"/>
        <end position="502"/>
    </location>
</feature>
<feature type="strand" evidence="8">
    <location>
        <begin position="503"/>
        <end position="509"/>
    </location>
</feature>
<feature type="helix" evidence="8">
    <location>
        <begin position="515"/>
        <end position="523"/>
    </location>
</feature>
<feature type="strand" evidence="8">
    <location>
        <begin position="528"/>
        <end position="535"/>
    </location>
</feature>
<feature type="helix" evidence="8">
    <location>
        <begin position="543"/>
        <end position="545"/>
    </location>
</feature>
<feature type="strand" evidence="7">
    <location>
        <begin position="547"/>
        <end position="549"/>
    </location>
</feature>
<feature type="helix" evidence="8">
    <location>
        <begin position="553"/>
        <end position="562"/>
    </location>
</feature>
<gene>
    <name type="primary">dsbD</name>
    <name type="synonym">cutA2</name>
    <name type="synonym">cycZ</name>
    <name type="synonym">dipZ</name>
    <name type="ordered locus">b4136</name>
    <name type="ordered locus">JW5734</name>
</gene>
<organism>
    <name type="scientific">Escherichia coli (strain K12)</name>
    <dbReference type="NCBI Taxonomy" id="83333"/>
    <lineage>
        <taxon>Bacteria</taxon>
        <taxon>Pseudomonadati</taxon>
        <taxon>Pseudomonadota</taxon>
        <taxon>Gammaproteobacteria</taxon>
        <taxon>Enterobacterales</taxon>
        <taxon>Enterobacteriaceae</taxon>
        <taxon>Escherichia</taxon>
    </lineage>
</organism>